<gene>
    <name evidence="1" type="primary">gpt</name>
    <name type="ordered locus">Nham_2590</name>
</gene>
<accession>Q1QK75</accession>
<comment type="function">
    <text evidence="1">Purine salvage pathway enzyme that catalyzes the transfer of the ribosyl-5-phosphate group from 5-phospho-alpha-D-ribose 1-diphosphate (PRPP) to the N9 position of the 6-oxopurines guanine and xanthine to form the corresponding ribonucleotides GMP (guanosine 5'-monophosphate) and XMP (xanthosine 5'-monophosphate), with the release of PPi. To a lesser extent, also acts on hypoxanthine.</text>
</comment>
<comment type="catalytic activity">
    <reaction evidence="1">
        <text>GMP + diphosphate = guanine + 5-phospho-alpha-D-ribose 1-diphosphate</text>
        <dbReference type="Rhea" id="RHEA:25424"/>
        <dbReference type="ChEBI" id="CHEBI:16235"/>
        <dbReference type="ChEBI" id="CHEBI:33019"/>
        <dbReference type="ChEBI" id="CHEBI:58017"/>
        <dbReference type="ChEBI" id="CHEBI:58115"/>
    </reaction>
    <physiologicalReaction direction="right-to-left" evidence="1">
        <dbReference type="Rhea" id="RHEA:25426"/>
    </physiologicalReaction>
</comment>
<comment type="catalytic activity">
    <reaction evidence="1">
        <text>XMP + diphosphate = xanthine + 5-phospho-alpha-D-ribose 1-diphosphate</text>
        <dbReference type="Rhea" id="RHEA:10800"/>
        <dbReference type="ChEBI" id="CHEBI:17712"/>
        <dbReference type="ChEBI" id="CHEBI:33019"/>
        <dbReference type="ChEBI" id="CHEBI:57464"/>
        <dbReference type="ChEBI" id="CHEBI:58017"/>
        <dbReference type="EC" id="2.4.2.22"/>
    </reaction>
    <physiologicalReaction direction="right-to-left" evidence="1">
        <dbReference type="Rhea" id="RHEA:10802"/>
    </physiologicalReaction>
</comment>
<comment type="catalytic activity">
    <reaction evidence="1">
        <text>IMP + diphosphate = hypoxanthine + 5-phospho-alpha-D-ribose 1-diphosphate</text>
        <dbReference type="Rhea" id="RHEA:17973"/>
        <dbReference type="ChEBI" id="CHEBI:17368"/>
        <dbReference type="ChEBI" id="CHEBI:33019"/>
        <dbReference type="ChEBI" id="CHEBI:58017"/>
        <dbReference type="ChEBI" id="CHEBI:58053"/>
    </reaction>
    <physiologicalReaction direction="right-to-left" evidence="1">
        <dbReference type="Rhea" id="RHEA:17975"/>
    </physiologicalReaction>
</comment>
<comment type="cofactor">
    <cofactor evidence="1">
        <name>Mg(2+)</name>
        <dbReference type="ChEBI" id="CHEBI:18420"/>
    </cofactor>
</comment>
<comment type="pathway">
    <text evidence="1">Purine metabolism; GMP biosynthesis via salvage pathway; GMP from guanine: step 1/1.</text>
</comment>
<comment type="pathway">
    <text evidence="1">Purine metabolism; XMP biosynthesis via salvage pathway; XMP from xanthine: step 1/1.</text>
</comment>
<comment type="subunit">
    <text evidence="1">Homotetramer.</text>
</comment>
<comment type="subcellular location">
    <subcellularLocation>
        <location evidence="1">Cell inner membrane</location>
        <topology evidence="1">Peripheral membrane protein</topology>
    </subcellularLocation>
</comment>
<comment type="similarity">
    <text evidence="1">Belongs to the purine/pyrimidine phosphoribosyltransferase family. XGPT subfamily.</text>
</comment>
<keyword id="KW-0997">Cell inner membrane</keyword>
<keyword id="KW-1003">Cell membrane</keyword>
<keyword id="KW-0328">Glycosyltransferase</keyword>
<keyword id="KW-0460">Magnesium</keyword>
<keyword id="KW-0472">Membrane</keyword>
<keyword id="KW-0479">Metal-binding</keyword>
<keyword id="KW-0660">Purine salvage</keyword>
<keyword id="KW-1185">Reference proteome</keyword>
<keyword id="KW-0808">Transferase</keyword>
<name>XGPT_NITHX</name>
<protein>
    <recommendedName>
        <fullName evidence="1">Xanthine-guanine phosphoribosyltransferase</fullName>
        <shortName evidence="1">XGPRT</shortName>
        <ecNumber evidence="1">2.4.2.-</ecNumber>
        <ecNumber evidence="1">2.4.2.22</ecNumber>
    </recommendedName>
    <alternativeName>
        <fullName evidence="1">Xanthine phosphoribosyltransferase</fullName>
    </alternativeName>
</protein>
<feature type="chain" id="PRO_0000261011" description="Xanthine-guanine phosphoribosyltransferase">
    <location>
        <begin position="1"/>
        <end position="168"/>
    </location>
</feature>
<feature type="binding site" evidence="1">
    <location>
        <begin position="43"/>
        <end position="44"/>
    </location>
    <ligand>
        <name>5-phospho-alpha-D-ribose 1-diphosphate</name>
        <dbReference type="ChEBI" id="CHEBI:58017"/>
    </ligand>
</feature>
<feature type="binding site" evidence="1">
    <location>
        <begin position="102"/>
        <end position="110"/>
    </location>
    <ligand>
        <name>5-phospho-alpha-D-ribose 1-diphosphate</name>
        <dbReference type="ChEBI" id="CHEBI:58017"/>
    </ligand>
</feature>
<feature type="binding site" evidence="1">
    <location>
        <position position="103"/>
    </location>
    <ligand>
        <name>Mg(2+)</name>
        <dbReference type="ChEBI" id="CHEBI:18420"/>
    </ligand>
</feature>
<feature type="binding site" evidence="1">
    <location>
        <begin position="106"/>
        <end position="110"/>
    </location>
    <ligand>
        <name>GMP</name>
        <dbReference type="ChEBI" id="CHEBI:58115"/>
    </ligand>
</feature>
<feature type="binding site" evidence="1">
    <location>
        <position position="106"/>
    </location>
    <ligand>
        <name>guanine</name>
        <dbReference type="ChEBI" id="CHEBI:16235"/>
    </ligand>
</feature>
<feature type="binding site" evidence="1">
    <location>
        <position position="106"/>
    </location>
    <ligand>
        <name>xanthine</name>
        <dbReference type="ChEBI" id="CHEBI:17712"/>
    </ligand>
</feature>
<feature type="binding site" evidence="1">
    <location>
        <begin position="148"/>
        <end position="149"/>
    </location>
    <ligand>
        <name>GMP</name>
        <dbReference type="ChEBI" id="CHEBI:58115"/>
    </ligand>
</feature>
<feature type="binding site" evidence="1">
    <location>
        <position position="149"/>
    </location>
    <ligand>
        <name>guanine</name>
        <dbReference type="ChEBI" id="CHEBI:16235"/>
    </ligand>
</feature>
<feature type="binding site" evidence="1">
    <location>
        <position position="149"/>
    </location>
    <ligand>
        <name>xanthine</name>
        <dbReference type="ChEBI" id="CHEBI:17712"/>
    </ligand>
</feature>
<organism>
    <name type="scientific">Nitrobacter hamburgensis (strain DSM 10229 / NCIMB 13809 / X14)</name>
    <dbReference type="NCBI Taxonomy" id="323097"/>
    <lineage>
        <taxon>Bacteria</taxon>
        <taxon>Pseudomonadati</taxon>
        <taxon>Pseudomonadota</taxon>
        <taxon>Alphaproteobacteria</taxon>
        <taxon>Hyphomicrobiales</taxon>
        <taxon>Nitrobacteraceae</taxon>
        <taxon>Nitrobacter</taxon>
    </lineage>
</organism>
<reference key="1">
    <citation type="submission" date="2006-03" db="EMBL/GenBank/DDBJ databases">
        <title>Complete sequence of chromosome of Nitrobacter hamburgensis X14.</title>
        <authorList>
            <consortium name="US DOE Joint Genome Institute"/>
            <person name="Copeland A."/>
            <person name="Lucas S."/>
            <person name="Lapidus A."/>
            <person name="Barry K."/>
            <person name="Detter J.C."/>
            <person name="Glavina del Rio T."/>
            <person name="Hammon N."/>
            <person name="Israni S."/>
            <person name="Dalin E."/>
            <person name="Tice H."/>
            <person name="Pitluck S."/>
            <person name="Chain P."/>
            <person name="Malfatti S."/>
            <person name="Shin M."/>
            <person name="Vergez L."/>
            <person name="Schmutz J."/>
            <person name="Larimer F."/>
            <person name="Land M."/>
            <person name="Hauser L."/>
            <person name="Kyrpides N."/>
            <person name="Ivanova N."/>
            <person name="Ward B."/>
            <person name="Arp D."/>
            <person name="Klotz M."/>
            <person name="Stein L."/>
            <person name="O'Mullan G."/>
            <person name="Starkenburg S."/>
            <person name="Sayavedra L."/>
            <person name="Poret-Peterson A.T."/>
            <person name="Gentry M.E."/>
            <person name="Bruce D."/>
            <person name="Richardson P."/>
        </authorList>
    </citation>
    <scope>NUCLEOTIDE SEQUENCE [LARGE SCALE GENOMIC DNA]</scope>
    <source>
        <strain>DSM 10229 / NCIMB 13809 / X14</strain>
    </source>
</reference>
<dbReference type="EC" id="2.4.2.-" evidence="1"/>
<dbReference type="EC" id="2.4.2.22" evidence="1"/>
<dbReference type="EMBL" id="CP000319">
    <property type="protein sequence ID" value="ABE63372.1"/>
    <property type="molecule type" value="Genomic_DNA"/>
</dbReference>
<dbReference type="RefSeq" id="WP_011511039.1">
    <property type="nucleotide sequence ID" value="NC_007964.1"/>
</dbReference>
<dbReference type="SMR" id="Q1QK75"/>
<dbReference type="STRING" id="323097.Nham_2590"/>
<dbReference type="KEGG" id="nha:Nham_2590"/>
<dbReference type="eggNOG" id="COG2236">
    <property type="taxonomic scope" value="Bacteria"/>
</dbReference>
<dbReference type="HOGENOM" id="CLU_080904_3_0_5"/>
<dbReference type="UniPathway" id="UPA00602">
    <property type="reaction ID" value="UER00658"/>
</dbReference>
<dbReference type="UniPathway" id="UPA00909">
    <property type="reaction ID" value="UER00887"/>
</dbReference>
<dbReference type="Proteomes" id="UP000001953">
    <property type="component" value="Chromosome"/>
</dbReference>
<dbReference type="GO" id="GO:0005886">
    <property type="term" value="C:plasma membrane"/>
    <property type="evidence" value="ECO:0007669"/>
    <property type="project" value="UniProtKB-SubCell"/>
</dbReference>
<dbReference type="GO" id="GO:0052657">
    <property type="term" value="F:guanine phosphoribosyltransferase activity"/>
    <property type="evidence" value="ECO:0007669"/>
    <property type="project" value="RHEA"/>
</dbReference>
<dbReference type="GO" id="GO:0004422">
    <property type="term" value="F:hypoxanthine phosphoribosyltransferase activity"/>
    <property type="evidence" value="ECO:0007669"/>
    <property type="project" value="RHEA"/>
</dbReference>
<dbReference type="GO" id="GO:0000287">
    <property type="term" value="F:magnesium ion binding"/>
    <property type="evidence" value="ECO:0007669"/>
    <property type="project" value="UniProtKB-UniRule"/>
</dbReference>
<dbReference type="GO" id="GO:0000310">
    <property type="term" value="F:xanthine phosphoribosyltransferase activity"/>
    <property type="evidence" value="ECO:0007669"/>
    <property type="project" value="UniProtKB-UniRule"/>
</dbReference>
<dbReference type="GO" id="GO:0032263">
    <property type="term" value="P:GMP salvage"/>
    <property type="evidence" value="ECO:0007669"/>
    <property type="project" value="UniProtKB-UniRule"/>
</dbReference>
<dbReference type="GO" id="GO:0006166">
    <property type="term" value="P:purine ribonucleoside salvage"/>
    <property type="evidence" value="ECO:0007669"/>
    <property type="project" value="UniProtKB-KW"/>
</dbReference>
<dbReference type="GO" id="GO:0032265">
    <property type="term" value="P:XMP salvage"/>
    <property type="evidence" value="ECO:0007669"/>
    <property type="project" value="UniProtKB-UniRule"/>
</dbReference>
<dbReference type="CDD" id="cd06223">
    <property type="entry name" value="PRTases_typeI"/>
    <property type="match status" value="1"/>
</dbReference>
<dbReference type="Gene3D" id="3.40.50.2020">
    <property type="match status" value="1"/>
</dbReference>
<dbReference type="HAMAP" id="MF_01903">
    <property type="entry name" value="XGPRT"/>
    <property type="match status" value="1"/>
</dbReference>
<dbReference type="InterPro" id="IPR000836">
    <property type="entry name" value="PRibTrfase_dom"/>
</dbReference>
<dbReference type="InterPro" id="IPR029057">
    <property type="entry name" value="PRTase-like"/>
</dbReference>
<dbReference type="InterPro" id="IPR023747">
    <property type="entry name" value="Xanthine_Guanine_PRibTrfase"/>
</dbReference>
<dbReference type="NCBIfam" id="NF006613">
    <property type="entry name" value="PRK09177.1"/>
    <property type="match status" value="1"/>
</dbReference>
<dbReference type="PANTHER" id="PTHR39563">
    <property type="entry name" value="XANTHINE PHOSPHORIBOSYLTRANSFERASE"/>
    <property type="match status" value="1"/>
</dbReference>
<dbReference type="PANTHER" id="PTHR39563:SF1">
    <property type="entry name" value="XANTHINE-GUANINE PHOSPHORIBOSYLTRANSFERASE"/>
    <property type="match status" value="1"/>
</dbReference>
<dbReference type="Pfam" id="PF00156">
    <property type="entry name" value="Pribosyltran"/>
    <property type="match status" value="1"/>
</dbReference>
<dbReference type="SUPFAM" id="SSF53271">
    <property type="entry name" value="PRTase-like"/>
    <property type="match status" value="1"/>
</dbReference>
<dbReference type="PROSITE" id="PS00103">
    <property type="entry name" value="PUR_PYR_PR_TRANSFER"/>
    <property type="match status" value="1"/>
</dbReference>
<sequence length="168" mass="18158">MTANTTPGKAFPVSWDQFHRDCRALTWRLNETGPFHAVVAITRGGLVPAAIVARELGVRVIDTVCIVSYDHNQKSELKVLKDISDATAKLGGGTGKGLLIVDDLVDTGATARVVRAMIPDAHFAAVYAKPLGKPLVDTFITEVSQDTWIYFPWDLDLAFAPPLRDGAA</sequence>
<evidence type="ECO:0000255" key="1">
    <source>
        <dbReference type="HAMAP-Rule" id="MF_01903"/>
    </source>
</evidence>
<proteinExistence type="inferred from homology"/>